<proteinExistence type="inferred from homology"/>
<dbReference type="EC" id="1.14.19.20"/>
<dbReference type="EMBL" id="AE016819">
    <property type="protein sequence ID" value="AAS53522.2"/>
    <property type="molecule type" value="Genomic_DNA"/>
</dbReference>
<dbReference type="RefSeq" id="NP_985698.2">
    <property type="nucleotide sequence ID" value="NM_211052.2"/>
</dbReference>
<dbReference type="SMR" id="Q754B9"/>
<dbReference type="FunCoup" id="Q754B9">
    <property type="interactions" value="197"/>
</dbReference>
<dbReference type="STRING" id="284811.Q754B9"/>
<dbReference type="EnsemblFungi" id="AAS53522">
    <property type="protein sequence ID" value="AAS53522"/>
    <property type="gene ID" value="AGOS_AFR151C"/>
</dbReference>
<dbReference type="GeneID" id="4621950"/>
<dbReference type="KEGG" id="ago:AGOS_AFR151C"/>
<dbReference type="eggNOG" id="KOG0872">
    <property type="taxonomic scope" value="Eukaryota"/>
</dbReference>
<dbReference type="HOGENOM" id="CLU_047036_3_0_1"/>
<dbReference type="InParanoid" id="Q754B9"/>
<dbReference type="OMA" id="ICTPYAS"/>
<dbReference type="OrthoDB" id="6354873at2759"/>
<dbReference type="UniPathway" id="UPA00768">
    <property type="reaction ID" value="UER00762"/>
</dbReference>
<dbReference type="Proteomes" id="UP000000591">
    <property type="component" value="Chromosome VI"/>
</dbReference>
<dbReference type="GO" id="GO:0005788">
    <property type="term" value="C:endoplasmic reticulum lumen"/>
    <property type="evidence" value="ECO:0007669"/>
    <property type="project" value="EnsemblFungi"/>
</dbReference>
<dbReference type="GO" id="GO:0005789">
    <property type="term" value="C:endoplasmic reticulum membrane"/>
    <property type="evidence" value="ECO:0007669"/>
    <property type="project" value="UniProtKB-SubCell"/>
</dbReference>
<dbReference type="GO" id="GO:0016020">
    <property type="term" value="C:membrane"/>
    <property type="evidence" value="ECO:0000318"/>
    <property type="project" value="GO_Central"/>
</dbReference>
<dbReference type="GO" id="GO:0000248">
    <property type="term" value="F:C-5 sterol desaturase activity"/>
    <property type="evidence" value="ECO:0000318"/>
    <property type="project" value="GO_Central"/>
</dbReference>
<dbReference type="GO" id="GO:0050046">
    <property type="term" value="F:delta7-sterol 5(6)-desaturase activity"/>
    <property type="evidence" value="ECO:0007669"/>
    <property type="project" value="UniProtKB-EC"/>
</dbReference>
<dbReference type="GO" id="GO:0005506">
    <property type="term" value="F:iron ion binding"/>
    <property type="evidence" value="ECO:0007669"/>
    <property type="project" value="InterPro"/>
</dbReference>
<dbReference type="GO" id="GO:0006696">
    <property type="term" value="P:ergosterol biosynthetic process"/>
    <property type="evidence" value="ECO:0007669"/>
    <property type="project" value="EnsemblFungi"/>
</dbReference>
<dbReference type="GO" id="GO:0016126">
    <property type="term" value="P:sterol biosynthetic process"/>
    <property type="evidence" value="ECO:0000318"/>
    <property type="project" value="GO_Central"/>
</dbReference>
<dbReference type="InterPro" id="IPR006694">
    <property type="entry name" value="Fatty_acid_hydroxylase"/>
</dbReference>
<dbReference type="InterPro" id="IPR050307">
    <property type="entry name" value="Sterol_Desaturase_Related"/>
</dbReference>
<dbReference type="PANTHER" id="PTHR11863">
    <property type="entry name" value="STEROL DESATURASE"/>
    <property type="match status" value="1"/>
</dbReference>
<dbReference type="Pfam" id="PF04116">
    <property type="entry name" value="FA_hydroxylase"/>
    <property type="match status" value="1"/>
</dbReference>
<accession>Q754B9</accession>
<feature type="chain" id="PRO_0000117019" description="Delta(7)-sterol 5(6)-desaturase">
    <location>
        <begin position="1"/>
        <end position="351"/>
    </location>
</feature>
<feature type="transmembrane region" description="Helical" evidence="3">
    <location>
        <begin position="88"/>
        <end position="108"/>
    </location>
</feature>
<feature type="transmembrane region" description="Helical" evidence="3">
    <location>
        <begin position="136"/>
        <end position="156"/>
    </location>
</feature>
<feature type="transmembrane region" description="Helical" evidence="3">
    <location>
        <begin position="173"/>
        <end position="193"/>
    </location>
</feature>
<feature type="transmembrane region" description="Helical" evidence="3">
    <location>
        <begin position="237"/>
        <end position="257"/>
    </location>
</feature>
<feature type="domain" description="Fatty acid hydroxylase" evidence="3">
    <location>
        <begin position="180"/>
        <end position="305"/>
    </location>
</feature>
<feature type="short sequence motif" description="Histidine box-1">
    <location>
        <begin position="194"/>
        <end position="198"/>
    </location>
</feature>
<feature type="short sequence motif" description="Histidine box-2">
    <location>
        <begin position="207"/>
        <end position="211"/>
    </location>
</feature>
<feature type="short sequence motif" description="Histidine box-3">
    <location>
        <begin position="282"/>
        <end position="286"/>
    </location>
</feature>
<protein>
    <recommendedName>
        <fullName>Delta(7)-sterol 5(6)-desaturase</fullName>
        <ecNumber>1.14.19.20</ecNumber>
    </recommendedName>
    <alternativeName>
        <fullName>C-5 sterol desaturase</fullName>
    </alternativeName>
    <alternativeName>
        <fullName>Ergosterol Delta(5,6) desaturase</fullName>
    </alternativeName>
    <alternativeName>
        <fullName>Sterol-C5-desaturase</fullName>
    </alternativeName>
</protein>
<sequence>MDLVLEFCDSYFFDYVYATLLPASLSPKMGGTWQQAMIKEQMVNATRVFGRSLERPLEVYGYAPFMFEVSPHAFGSVLPRYSLLRQSLSLFLVTTVFGWLLYLIVASFSYVFVFDKSVFNHPRYLKNQMSMEIKQGLGAIPYMAVMTVPWFLLELHGYSHLYMGLELNVRGYVRLALEALFFILFTDFGIYLLHRWLHWPAVYKVLHKKHHKWLVCTPFASHAFHPIDGYLQSLPYHLFPMLFPLHKVSYLVLFTFVNVWTVMIHDGEYLSNDPVINGAACHTVHHLYFNYNYGQFTTLWDRLGGSYREPDHELFDSNLKKDKAVWEQQIKEVDEMIKNVEGPADDRVYER</sequence>
<keyword id="KW-0256">Endoplasmic reticulum</keyword>
<keyword id="KW-0408">Iron</keyword>
<keyword id="KW-0444">Lipid biosynthesis</keyword>
<keyword id="KW-0443">Lipid metabolism</keyword>
<keyword id="KW-0472">Membrane</keyword>
<keyword id="KW-0560">Oxidoreductase</keyword>
<keyword id="KW-1185">Reference proteome</keyword>
<keyword id="KW-0752">Steroid biosynthesis</keyword>
<keyword id="KW-0753">Steroid metabolism</keyword>
<keyword id="KW-0756">Sterol biosynthesis</keyword>
<keyword id="KW-1207">Sterol metabolism</keyword>
<keyword id="KW-0812">Transmembrane</keyword>
<keyword id="KW-1133">Transmembrane helix</keyword>
<name>ERG3_EREGS</name>
<organism>
    <name type="scientific">Eremothecium gossypii (strain ATCC 10895 / CBS 109.51 / FGSC 9923 / NRRL Y-1056)</name>
    <name type="common">Yeast</name>
    <name type="synonym">Ashbya gossypii</name>
    <dbReference type="NCBI Taxonomy" id="284811"/>
    <lineage>
        <taxon>Eukaryota</taxon>
        <taxon>Fungi</taxon>
        <taxon>Dikarya</taxon>
        <taxon>Ascomycota</taxon>
        <taxon>Saccharomycotina</taxon>
        <taxon>Saccharomycetes</taxon>
        <taxon>Saccharomycetales</taxon>
        <taxon>Saccharomycetaceae</taxon>
        <taxon>Eremothecium</taxon>
    </lineage>
</organism>
<comment type="function">
    <text evidence="2">Catalyzes the introduction of a C-5 double bond in the B ring of ergosterol. May contribute to the regulation of ergosterol biosynthesis.</text>
</comment>
<comment type="catalytic activity">
    <reaction evidence="2">
        <text>a Delta(7)-sterol + 2 Fe(II)-[cytochrome b5] + O2 + 2 H(+) = a Delta(5),Delta(7)-sterol + 2 Fe(III)-[cytochrome b5] + 2 H2O</text>
        <dbReference type="Rhea" id="RHEA:54320"/>
        <dbReference type="Rhea" id="RHEA-COMP:10438"/>
        <dbReference type="Rhea" id="RHEA-COMP:10439"/>
        <dbReference type="ChEBI" id="CHEBI:15377"/>
        <dbReference type="ChEBI" id="CHEBI:15378"/>
        <dbReference type="ChEBI" id="CHEBI:15379"/>
        <dbReference type="ChEBI" id="CHEBI:29033"/>
        <dbReference type="ChEBI" id="CHEBI:29034"/>
        <dbReference type="ChEBI" id="CHEBI:138130"/>
        <dbReference type="ChEBI" id="CHEBI:138131"/>
        <dbReference type="EC" id="1.14.19.20"/>
    </reaction>
</comment>
<comment type="cofactor">
    <cofactor evidence="1">
        <name>Fe cation</name>
        <dbReference type="ChEBI" id="CHEBI:24875"/>
    </cofactor>
</comment>
<comment type="pathway">
    <text>Steroid metabolism; ergosterol biosynthesis; ergosterol from zymosterol: step 3/5.</text>
</comment>
<comment type="subcellular location">
    <subcellularLocation>
        <location evidence="4">Endoplasmic reticulum membrane</location>
        <topology evidence="4">Multi-pass membrane protein</topology>
    </subcellularLocation>
</comment>
<comment type="domain">
    <text>The histidine box domains may contain the active site and/or be involved in metal ion binding.</text>
</comment>
<comment type="similarity">
    <text evidence="4">Belongs to the sterol desaturase family.</text>
</comment>
<gene>
    <name type="primary">ERG3</name>
    <name type="ordered locus">AFR151C</name>
</gene>
<reference key="1">
    <citation type="journal article" date="2004" name="Science">
        <title>The Ashbya gossypii genome as a tool for mapping the ancient Saccharomyces cerevisiae genome.</title>
        <authorList>
            <person name="Dietrich F.S."/>
            <person name="Voegeli S."/>
            <person name="Brachat S."/>
            <person name="Lerch A."/>
            <person name="Gates K."/>
            <person name="Steiner S."/>
            <person name="Mohr C."/>
            <person name="Poehlmann R."/>
            <person name="Luedi P."/>
            <person name="Choi S."/>
            <person name="Wing R.A."/>
            <person name="Flavier A."/>
            <person name="Gaffney T.D."/>
            <person name="Philippsen P."/>
        </authorList>
    </citation>
    <scope>NUCLEOTIDE SEQUENCE [LARGE SCALE GENOMIC DNA]</scope>
    <source>
        <strain>ATCC 10895 / CBS 109.51 / FGSC 9923 / NRRL Y-1056</strain>
    </source>
</reference>
<reference key="2">
    <citation type="journal article" date="2013" name="G3 (Bethesda)">
        <title>Genomes of Ashbya fungi isolated from insects reveal four mating-type loci, numerous translocations, lack of transposons, and distinct gene duplications.</title>
        <authorList>
            <person name="Dietrich F.S."/>
            <person name="Voegeli S."/>
            <person name="Kuo S."/>
            <person name="Philippsen P."/>
        </authorList>
    </citation>
    <scope>GENOME REANNOTATION</scope>
    <scope>SEQUENCE REVISION TO 178</scope>
    <source>
        <strain>ATCC 10895 / CBS 109.51 / FGSC 9923 / NRRL Y-1056</strain>
    </source>
</reference>
<evidence type="ECO:0000250" key="1"/>
<evidence type="ECO:0000250" key="2">
    <source>
        <dbReference type="UniProtKB" id="P32353"/>
    </source>
</evidence>
<evidence type="ECO:0000255" key="3"/>
<evidence type="ECO:0000305" key="4"/>